<protein>
    <recommendedName>
        <fullName evidence="1">Ribosome-binding factor A</fullName>
    </recommendedName>
</protein>
<reference key="1">
    <citation type="journal article" date="2006" name="J. Bacteriol.">
        <title>Comparative genomic evidence for a close relationship between the dimorphic prosthecate bacteria Hyphomonas neptunium and Caulobacter crescentus.</title>
        <authorList>
            <person name="Badger J.H."/>
            <person name="Hoover T.R."/>
            <person name="Brun Y.V."/>
            <person name="Weiner R.M."/>
            <person name="Laub M.T."/>
            <person name="Alexandre G."/>
            <person name="Mrazek J."/>
            <person name="Ren Q."/>
            <person name="Paulsen I.T."/>
            <person name="Nelson K.E."/>
            <person name="Khouri H.M."/>
            <person name="Radune D."/>
            <person name="Sosa J."/>
            <person name="Dodson R.J."/>
            <person name="Sullivan S.A."/>
            <person name="Rosovitz M.J."/>
            <person name="Madupu R."/>
            <person name="Brinkac L.M."/>
            <person name="Durkin A.S."/>
            <person name="Daugherty S.C."/>
            <person name="Kothari S.P."/>
            <person name="Giglio M.G."/>
            <person name="Zhou L."/>
            <person name="Haft D.H."/>
            <person name="Selengut J.D."/>
            <person name="Davidsen T.M."/>
            <person name="Yang Q."/>
            <person name="Zafar N."/>
            <person name="Ward N.L."/>
        </authorList>
    </citation>
    <scope>NUCLEOTIDE SEQUENCE [LARGE SCALE GENOMIC DNA]</scope>
    <source>
        <strain>ATCC 15444</strain>
    </source>
</reference>
<proteinExistence type="inferred from homology"/>
<evidence type="ECO:0000255" key="1">
    <source>
        <dbReference type="HAMAP-Rule" id="MF_00003"/>
    </source>
</evidence>
<organism>
    <name type="scientific">Hyphomonas neptunium (strain ATCC 15444)</name>
    <dbReference type="NCBI Taxonomy" id="228405"/>
    <lineage>
        <taxon>Bacteria</taxon>
        <taxon>Pseudomonadati</taxon>
        <taxon>Pseudomonadota</taxon>
        <taxon>Alphaproteobacteria</taxon>
        <taxon>Hyphomonadales</taxon>
        <taxon>Hyphomonadaceae</taxon>
        <taxon>Hyphomonas</taxon>
    </lineage>
</organism>
<accession>Q0C5Z4</accession>
<feature type="chain" id="PRO_0000321224" description="Ribosome-binding factor A">
    <location>
        <begin position="1"/>
        <end position="135"/>
    </location>
</feature>
<name>RBFA_HYPNA</name>
<gene>
    <name evidence="1" type="primary">rbfA</name>
    <name type="ordered locus">HNE_0115</name>
</gene>
<keyword id="KW-0963">Cytoplasm</keyword>
<keyword id="KW-1185">Reference proteome</keyword>
<keyword id="KW-0690">Ribosome biogenesis</keyword>
<dbReference type="EMBL" id="CP000158">
    <property type="protein sequence ID" value="ABI77772.1"/>
    <property type="molecule type" value="Genomic_DNA"/>
</dbReference>
<dbReference type="RefSeq" id="WP_011645149.1">
    <property type="nucleotide sequence ID" value="NC_008358.1"/>
</dbReference>
<dbReference type="SMR" id="Q0C5Z4"/>
<dbReference type="STRING" id="228405.HNE_0115"/>
<dbReference type="KEGG" id="hne:HNE_0115"/>
<dbReference type="eggNOG" id="COG0858">
    <property type="taxonomic scope" value="Bacteria"/>
</dbReference>
<dbReference type="HOGENOM" id="CLU_089475_1_0_5"/>
<dbReference type="Proteomes" id="UP000001959">
    <property type="component" value="Chromosome"/>
</dbReference>
<dbReference type="GO" id="GO:0005829">
    <property type="term" value="C:cytosol"/>
    <property type="evidence" value="ECO:0007669"/>
    <property type="project" value="TreeGrafter"/>
</dbReference>
<dbReference type="GO" id="GO:0043024">
    <property type="term" value="F:ribosomal small subunit binding"/>
    <property type="evidence" value="ECO:0007669"/>
    <property type="project" value="TreeGrafter"/>
</dbReference>
<dbReference type="GO" id="GO:0030490">
    <property type="term" value="P:maturation of SSU-rRNA"/>
    <property type="evidence" value="ECO:0007669"/>
    <property type="project" value="UniProtKB-UniRule"/>
</dbReference>
<dbReference type="Gene3D" id="3.30.300.20">
    <property type="match status" value="1"/>
</dbReference>
<dbReference type="HAMAP" id="MF_00003">
    <property type="entry name" value="RbfA"/>
    <property type="match status" value="1"/>
</dbReference>
<dbReference type="InterPro" id="IPR015946">
    <property type="entry name" value="KH_dom-like_a/b"/>
</dbReference>
<dbReference type="InterPro" id="IPR000238">
    <property type="entry name" value="RbfA"/>
</dbReference>
<dbReference type="InterPro" id="IPR023799">
    <property type="entry name" value="RbfA_dom_sf"/>
</dbReference>
<dbReference type="InterPro" id="IPR020053">
    <property type="entry name" value="Ribosome-bd_factorA_CS"/>
</dbReference>
<dbReference type="NCBIfam" id="NF001802">
    <property type="entry name" value="PRK00521.2-5"/>
    <property type="match status" value="1"/>
</dbReference>
<dbReference type="NCBIfam" id="TIGR00082">
    <property type="entry name" value="rbfA"/>
    <property type="match status" value="1"/>
</dbReference>
<dbReference type="PANTHER" id="PTHR33515">
    <property type="entry name" value="RIBOSOME-BINDING FACTOR A, CHLOROPLASTIC-RELATED"/>
    <property type="match status" value="1"/>
</dbReference>
<dbReference type="PANTHER" id="PTHR33515:SF1">
    <property type="entry name" value="RIBOSOME-BINDING FACTOR A, CHLOROPLASTIC-RELATED"/>
    <property type="match status" value="1"/>
</dbReference>
<dbReference type="Pfam" id="PF02033">
    <property type="entry name" value="RBFA"/>
    <property type="match status" value="1"/>
</dbReference>
<dbReference type="SUPFAM" id="SSF89919">
    <property type="entry name" value="Ribosome-binding factor A, RbfA"/>
    <property type="match status" value="1"/>
</dbReference>
<dbReference type="PROSITE" id="PS01319">
    <property type="entry name" value="RBFA"/>
    <property type="match status" value="1"/>
</dbReference>
<comment type="function">
    <text evidence="1">One of several proteins that assist in the late maturation steps of the functional core of the 30S ribosomal subunit. Associates with free 30S ribosomal subunits (but not with 30S subunits that are part of 70S ribosomes or polysomes). Required for efficient processing of 16S rRNA. May interact with the 5'-terminal helix region of 16S rRNA.</text>
</comment>
<comment type="subunit">
    <text evidence="1">Monomer. Binds 30S ribosomal subunits, but not 50S ribosomal subunits or 70S ribosomes.</text>
</comment>
<comment type="subcellular location">
    <subcellularLocation>
        <location evidence="1">Cytoplasm</location>
    </subcellularLocation>
</comment>
<comment type="similarity">
    <text evidence="1">Belongs to the RbfA family.</text>
</comment>
<sequence length="135" mass="15246">MARRQTPPGLPSQRQLRAGEIVRHALAEIISREDFRDPDLSNVIVTVGEVRCSPDLKHANIFVTPLGDDSEEGRKRLADALTRAKGFLRTRLGREIELKFTPELHFIADSSYDEATAIDRLLNDPRVRRDVESEG</sequence>